<evidence type="ECO:0000255" key="1"/>
<evidence type="ECO:0000305" key="2"/>
<gene>
    <name type="ordered locus">MJ1588</name>
</gene>
<comment type="subcellular location">
    <subcellularLocation>
        <location evidence="2">Membrane</location>
        <topology evidence="2">Single-pass membrane protein</topology>
    </subcellularLocation>
</comment>
<reference key="1">
    <citation type="journal article" date="1996" name="Science">
        <title>Complete genome sequence of the methanogenic archaeon, Methanococcus jannaschii.</title>
        <authorList>
            <person name="Bult C.J."/>
            <person name="White O."/>
            <person name="Olsen G.J."/>
            <person name="Zhou L."/>
            <person name="Fleischmann R.D."/>
            <person name="Sutton G.G."/>
            <person name="Blake J.A."/>
            <person name="FitzGerald L.M."/>
            <person name="Clayton R.A."/>
            <person name="Gocayne J.D."/>
            <person name="Kerlavage A.R."/>
            <person name="Dougherty B.A."/>
            <person name="Tomb J.-F."/>
            <person name="Adams M.D."/>
            <person name="Reich C.I."/>
            <person name="Overbeek R."/>
            <person name="Kirkness E.F."/>
            <person name="Weinstock K.G."/>
            <person name="Merrick J.M."/>
            <person name="Glodek A."/>
            <person name="Scott J.L."/>
            <person name="Geoghagen N.S.M."/>
            <person name="Weidman J.F."/>
            <person name="Fuhrmann J.L."/>
            <person name="Nguyen D."/>
            <person name="Utterback T.R."/>
            <person name="Kelley J.M."/>
            <person name="Peterson J.D."/>
            <person name="Sadow P.W."/>
            <person name="Hanna M.C."/>
            <person name="Cotton M.D."/>
            <person name="Roberts K.M."/>
            <person name="Hurst M.A."/>
            <person name="Kaine B.P."/>
            <person name="Borodovsky M."/>
            <person name="Klenk H.-P."/>
            <person name="Fraser C.M."/>
            <person name="Smith H.O."/>
            <person name="Woese C.R."/>
            <person name="Venter J.C."/>
        </authorList>
    </citation>
    <scope>NUCLEOTIDE SEQUENCE [LARGE SCALE GENOMIC DNA]</scope>
    <source>
        <strain>ATCC 43067 / DSM 2661 / JAL-1 / JCM 10045 / NBRC 100440</strain>
    </source>
</reference>
<accession>Q58983</accession>
<sequence>MVGNAYTLFEGNSADDLYKAIVKKRTTYEGKPTPLYQAILWSYKVVYTSEKKLIKSLIFRIGDNTIDSIKLYKKILGVFGGFIYILTPLPIVSGFLGNYYLKKKAKEKMKEV</sequence>
<organism>
    <name type="scientific">Methanocaldococcus jannaschii (strain ATCC 43067 / DSM 2661 / JAL-1 / JCM 10045 / NBRC 100440)</name>
    <name type="common">Methanococcus jannaschii</name>
    <dbReference type="NCBI Taxonomy" id="243232"/>
    <lineage>
        <taxon>Archaea</taxon>
        <taxon>Methanobacteriati</taxon>
        <taxon>Methanobacteriota</taxon>
        <taxon>Methanomada group</taxon>
        <taxon>Methanococci</taxon>
        <taxon>Methanococcales</taxon>
        <taxon>Methanocaldococcaceae</taxon>
        <taxon>Methanocaldococcus</taxon>
    </lineage>
</organism>
<keyword id="KW-0472">Membrane</keyword>
<keyword id="KW-1185">Reference proteome</keyword>
<keyword id="KW-0812">Transmembrane</keyword>
<keyword id="KW-1133">Transmembrane helix</keyword>
<proteinExistence type="predicted"/>
<dbReference type="EMBL" id="L77117">
    <property type="protein sequence ID" value="AAB99609.1"/>
    <property type="molecule type" value="Genomic_DNA"/>
</dbReference>
<dbReference type="PIR" id="C64498">
    <property type="entry name" value="C64498"/>
</dbReference>
<dbReference type="STRING" id="243232.MJ_1588"/>
<dbReference type="PaxDb" id="243232-MJ_1588"/>
<dbReference type="EnsemblBacteria" id="AAB99609">
    <property type="protein sequence ID" value="AAB99609"/>
    <property type="gene ID" value="MJ_1588"/>
</dbReference>
<dbReference type="KEGG" id="mja:MJ_1588"/>
<dbReference type="eggNOG" id="arCOG00306">
    <property type="taxonomic scope" value="Archaea"/>
</dbReference>
<dbReference type="HOGENOM" id="CLU_2140208_0_0_2"/>
<dbReference type="InParanoid" id="Q58983"/>
<dbReference type="Proteomes" id="UP000000805">
    <property type="component" value="Chromosome"/>
</dbReference>
<dbReference type="GO" id="GO:0016020">
    <property type="term" value="C:membrane"/>
    <property type="evidence" value="ECO:0007669"/>
    <property type="project" value="UniProtKB-SubCell"/>
</dbReference>
<name>Y1588_METJA</name>
<feature type="chain" id="PRO_0000107429" description="Uncharacterized protein MJ1588">
    <location>
        <begin position="1"/>
        <end position="112"/>
    </location>
</feature>
<feature type="transmembrane region" description="Helical" evidence="1">
    <location>
        <begin position="75"/>
        <end position="95"/>
    </location>
</feature>
<protein>
    <recommendedName>
        <fullName>Uncharacterized protein MJ1588</fullName>
    </recommendedName>
</protein>